<protein>
    <recommendedName>
        <fullName evidence="1">UPF0173 metal-dependent hydrolase BRA0596/BS1330_II0591</fullName>
    </recommendedName>
</protein>
<organism>
    <name type="scientific">Brucella suis biovar 1 (strain 1330)</name>
    <dbReference type="NCBI Taxonomy" id="204722"/>
    <lineage>
        <taxon>Bacteria</taxon>
        <taxon>Pseudomonadati</taxon>
        <taxon>Pseudomonadota</taxon>
        <taxon>Alphaproteobacteria</taxon>
        <taxon>Hyphomicrobiales</taxon>
        <taxon>Brucellaceae</taxon>
        <taxon>Brucella/Ochrobactrum group</taxon>
        <taxon>Brucella</taxon>
    </lineage>
</organism>
<keyword id="KW-0378">Hydrolase</keyword>
<proteinExistence type="inferred from homology"/>
<accession>Q8FW66</accession>
<accession>G0KCX4</accession>
<evidence type="ECO:0000255" key="1">
    <source>
        <dbReference type="HAMAP-Rule" id="MF_00457"/>
    </source>
</evidence>
<feature type="chain" id="PRO_0000367169" description="UPF0173 metal-dependent hydrolase BRA0596/BS1330_II0591">
    <location>
        <begin position="1"/>
        <end position="237"/>
    </location>
</feature>
<reference key="1">
    <citation type="journal article" date="2002" name="Proc. Natl. Acad. Sci. U.S.A.">
        <title>The Brucella suis genome reveals fundamental similarities between animal and plant pathogens and symbionts.</title>
        <authorList>
            <person name="Paulsen I.T."/>
            <person name="Seshadri R."/>
            <person name="Nelson K.E."/>
            <person name="Eisen J.A."/>
            <person name="Heidelberg J.F."/>
            <person name="Read T.D."/>
            <person name="Dodson R.J."/>
            <person name="Umayam L.A."/>
            <person name="Brinkac L.M."/>
            <person name="Beanan M.J."/>
            <person name="Daugherty S.C."/>
            <person name="DeBoy R.T."/>
            <person name="Durkin A.S."/>
            <person name="Kolonay J.F."/>
            <person name="Madupu R."/>
            <person name="Nelson W.C."/>
            <person name="Ayodeji B."/>
            <person name="Kraul M."/>
            <person name="Shetty J."/>
            <person name="Malek J.A."/>
            <person name="Van Aken S.E."/>
            <person name="Riedmuller S."/>
            <person name="Tettelin H."/>
            <person name="Gill S.R."/>
            <person name="White O."/>
            <person name="Salzberg S.L."/>
            <person name="Hoover D.L."/>
            <person name="Lindler L.E."/>
            <person name="Halling S.M."/>
            <person name="Boyle S.M."/>
            <person name="Fraser C.M."/>
        </authorList>
    </citation>
    <scope>NUCLEOTIDE SEQUENCE [LARGE SCALE GENOMIC DNA]</scope>
    <source>
        <strain>1330</strain>
    </source>
</reference>
<reference key="2">
    <citation type="journal article" date="2011" name="J. Bacteriol.">
        <title>Revised genome sequence of Brucella suis 1330.</title>
        <authorList>
            <person name="Tae H."/>
            <person name="Shallom S."/>
            <person name="Settlage R."/>
            <person name="Preston D."/>
            <person name="Adams L.G."/>
            <person name="Garner H.R."/>
        </authorList>
    </citation>
    <scope>NUCLEOTIDE SEQUENCE [LARGE SCALE GENOMIC DNA]</scope>
    <source>
        <strain>1330</strain>
    </source>
</reference>
<dbReference type="EMBL" id="AE014292">
    <property type="protein sequence ID" value="AAN33785.1"/>
    <property type="molecule type" value="Genomic_DNA"/>
</dbReference>
<dbReference type="EMBL" id="CP002998">
    <property type="protein sequence ID" value="AEM20062.1"/>
    <property type="molecule type" value="Genomic_DNA"/>
</dbReference>
<dbReference type="RefSeq" id="WP_006133812.1">
    <property type="nucleotide sequence ID" value="NZ_KN046805.1"/>
</dbReference>
<dbReference type="SMR" id="Q8FW66"/>
<dbReference type="KEGG" id="bms:BRA0596"/>
<dbReference type="KEGG" id="bsi:BS1330_II0591"/>
<dbReference type="PATRIC" id="fig|204722.21.peg.544"/>
<dbReference type="HOGENOM" id="CLU_070010_4_0_5"/>
<dbReference type="PhylomeDB" id="Q8FW66"/>
<dbReference type="Proteomes" id="UP000007104">
    <property type="component" value="Chromosome II"/>
</dbReference>
<dbReference type="GO" id="GO:0016787">
    <property type="term" value="F:hydrolase activity"/>
    <property type="evidence" value="ECO:0007669"/>
    <property type="project" value="UniProtKB-UniRule"/>
</dbReference>
<dbReference type="CDD" id="cd06262">
    <property type="entry name" value="metallo-hydrolase-like_MBL-fold"/>
    <property type="match status" value="1"/>
</dbReference>
<dbReference type="Gene3D" id="3.60.15.10">
    <property type="entry name" value="Ribonuclease Z/Hydroxyacylglutathione hydrolase-like"/>
    <property type="match status" value="1"/>
</dbReference>
<dbReference type="HAMAP" id="MF_00457">
    <property type="entry name" value="UPF0173"/>
    <property type="match status" value="1"/>
</dbReference>
<dbReference type="InterPro" id="IPR001279">
    <property type="entry name" value="Metallo-B-lactamas"/>
</dbReference>
<dbReference type="InterPro" id="IPR036866">
    <property type="entry name" value="RibonucZ/Hydroxyglut_hydro"/>
</dbReference>
<dbReference type="InterPro" id="IPR022877">
    <property type="entry name" value="UPF0173"/>
</dbReference>
<dbReference type="InterPro" id="IPR050114">
    <property type="entry name" value="UPF0173_UPF0282_UlaG_hydrolase"/>
</dbReference>
<dbReference type="NCBIfam" id="NF001911">
    <property type="entry name" value="PRK00685.1"/>
    <property type="match status" value="1"/>
</dbReference>
<dbReference type="PANTHER" id="PTHR43546:SF3">
    <property type="entry name" value="UPF0173 METAL-DEPENDENT HYDROLASE MJ1163"/>
    <property type="match status" value="1"/>
</dbReference>
<dbReference type="PANTHER" id="PTHR43546">
    <property type="entry name" value="UPF0173 METAL-DEPENDENT HYDROLASE MJ1163-RELATED"/>
    <property type="match status" value="1"/>
</dbReference>
<dbReference type="Pfam" id="PF13483">
    <property type="entry name" value="Lactamase_B_3"/>
    <property type="match status" value="1"/>
</dbReference>
<dbReference type="SMART" id="SM00849">
    <property type="entry name" value="Lactamase_B"/>
    <property type="match status" value="1"/>
</dbReference>
<dbReference type="SUPFAM" id="SSF56281">
    <property type="entry name" value="Metallo-hydrolase/oxidoreductase"/>
    <property type="match status" value="1"/>
</dbReference>
<gene>
    <name type="ordered locus">BRA0596</name>
    <name type="ordered locus">BS1330_II0591</name>
</gene>
<comment type="similarity">
    <text evidence="1">Belongs to the UPF0173 family.</text>
</comment>
<name>Y3596_BRUSU</name>
<sequence length="237" mass="25052">MKITWLGHAAFRVETAKAVILIDPFLNGNPGAKGIDFKGATRGVTHIALTHGHGDHVGDTVAIAREHGATVIANADLASWLGSQGVEKLDPGNTGGTLAHEGFTITFVNALHSSAMLTENGVSQALGNPNGLVFHFEDSPTLYHMGDTDIFSDMALINELHQPEIGIVPIGDRFTMGGAVAALACQRYFNFNSVLPCHYASFPIIDRTADKFIAGMADHPATKVLADPAGTVHSFQA</sequence>